<protein>
    <recommendedName>
        <fullName>Purple acid phosphatase 7</fullName>
        <ecNumber>3.1.3.2</ecNumber>
    </recommendedName>
</protein>
<organism>
    <name type="scientific">Arabidopsis thaliana</name>
    <name type="common">Mouse-ear cress</name>
    <dbReference type="NCBI Taxonomy" id="3702"/>
    <lineage>
        <taxon>Eukaryota</taxon>
        <taxon>Viridiplantae</taxon>
        <taxon>Streptophyta</taxon>
        <taxon>Embryophyta</taxon>
        <taxon>Tracheophyta</taxon>
        <taxon>Spermatophyta</taxon>
        <taxon>Magnoliopsida</taxon>
        <taxon>eudicotyledons</taxon>
        <taxon>Gunneridae</taxon>
        <taxon>Pentapetalae</taxon>
        <taxon>rosids</taxon>
        <taxon>malvids</taxon>
        <taxon>Brassicales</taxon>
        <taxon>Brassicaceae</taxon>
        <taxon>Camelineae</taxon>
        <taxon>Arabidopsis</taxon>
    </lineage>
</organism>
<keyword id="KW-0325">Glycoprotein</keyword>
<keyword id="KW-0378">Hydrolase</keyword>
<keyword id="KW-0408">Iron</keyword>
<keyword id="KW-0479">Metal-binding</keyword>
<keyword id="KW-1185">Reference proteome</keyword>
<keyword id="KW-0964">Secreted</keyword>
<keyword id="KW-0732">Signal</keyword>
<keyword id="KW-0862">Zinc</keyword>
<name>PPA7_ARATH</name>
<accession>Q8S341</accession>
<accession>Q8GWH8</accession>
<accession>Q9SIS6</accession>
<reference key="1">
    <citation type="journal article" date="2002" name="J. Biol. Chem.">
        <title>Purple acid phosphatases of Arabidopsis thaliana. Comparative analysis and differential regulation by phosphate deprivation.</title>
        <authorList>
            <person name="Li D."/>
            <person name="Zhu H."/>
            <person name="Liu K."/>
            <person name="Liu X."/>
            <person name="Leggewie G."/>
            <person name="Udvardi M."/>
            <person name="Wang D."/>
        </authorList>
    </citation>
    <scope>NUCLEOTIDE SEQUENCE [MRNA]</scope>
    <scope>GENE FAMILY</scope>
    <scope>NOMENCLATURE</scope>
    <source>
        <strain>cv. Col-1</strain>
    </source>
</reference>
<reference key="2">
    <citation type="journal article" date="1999" name="Nature">
        <title>Sequence and analysis of chromosome 2 of the plant Arabidopsis thaliana.</title>
        <authorList>
            <person name="Lin X."/>
            <person name="Kaul S."/>
            <person name="Rounsley S.D."/>
            <person name="Shea T.P."/>
            <person name="Benito M.-I."/>
            <person name="Town C.D."/>
            <person name="Fujii C.Y."/>
            <person name="Mason T.M."/>
            <person name="Bowman C.L."/>
            <person name="Barnstead M.E."/>
            <person name="Feldblyum T.V."/>
            <person name="Buell C.R."/>
            <person name="Ketchum K.A."/>
            <person name="Lee J.J."/>
            <person name="Ronning C.M."/>
            <person name="Koo H.L."/>
            <person name="Moffat K.S."/>
            <person name="Cronin L.A."/>
            <person name="Shen M."/>
            <person name="Pai G."/>
            <person name="Van Aken S."/>
            <person name="Umayam L."/>
            <person name="Tallon L.J."/>
            <person name="Gill J.E."/>
            <person name="Adams M.D."/>
            <person name="Carrera A.J."/>
            <person name="Creasy T.H."/>
            <person name="Goodman H.M."/>
            <person name="Somerville C.R."/>
            <person name="Copenhaver G.P."/>
            <person name="Preuss D."/>
            <person name="Nierman W.C."/>
            <person name="White O."/>
            <person name="Eisen J.A."/>
            <person name="Salzberg S.L."/>
            <person name="Fraser C.M."/>
            <person name="Venter J.C."/>
        </authorList>
    </citation>
    <scope>NUCLEOTIDE SEQUENCE [LARGE SCALE GENOMIC DNA]</scope>
    <source>
        <strain>cv. Columbia</strain>
    </source>
</reference>
<reference key="3">
    <citation type="journal article" date="2017" name="Plant J.">
        <title>Araport11: a complete reannotation of the Arabidopsis thaliana reference genome.</title>
        <authorList>
            <person name="Cheng C.Y."/>
            <person name="Krishnakumar V."/>
            <person name="Chan A.P."/>
            <person name="Thibaud-Nissen F."/>
            <person name="Schobel S."/>
            <person name="Town C.D."/>
        </authorList>
    </citation>
    <scope>GENOME REANNOTATION</scope>
    <source>
        <strain>cv. Columbia</strain>
    </source>
</reference>
<reference key="4">
    <citation type="journal article" date="2002" name="Science">
        <title>Functional annotation of a full-length Arabidopsis cDNA collection.</title>
        <authorList>
            <person name="Seki M."/>
            <person name="Narusaka M."/>
            <person name="Kamiya A."/>
            <person name="Ishida J."/>
            <person name="Satou M."/>
            <person name="Sakurai T."/>
            <person name="Nakajima M."/>
            <person name="Enju A."/>
            <person name="Akiyama K."/>
            <person name="Oono Y."/>
            <person name="Muramatsu M."/>
            <person name="Hayashizaki Y."/>
            <person name="Kawai J."/>
            <person name="Carninci P."/>
            <person name="Itoh M."/>
            <person name="Ishii Y."/>
            <person name="Arakawa T."/>
            <person name="Shibata K."/>
            <person name="Shinagawa A."/>
            <person name="Shinozaki K."/>
        </authorList>
    </citation>
    <scope>NUCLEOTIDE SEQUENCE [LARGE SCALE MRNA]</scope>
    <source>
        <strain>cv. Columbia</strain>
    </source>
</reference>
<reference key="5">
    <citation type="submission" date="2006-08" db="EMBL/GenBank/DDBJ databases">
        <title>Arabidopsis ORF Clones.</title>
        <authorList>
            <person name="Quinitio C."/>
            <person name="Chen H."/>
            <person name="Kim C.J."/>
            <person name="Shinn P."/>
            <person name="Ecker J.R."/>
        </authorList>
    </citation>
    <scope>NUCLEOTIDE SEQUENCE [LARGE SCALE MRNA]</scope>
    <source>
        <strain>cv. Columbia</strain>
    </source>
</reference>
<reference key="6">
    <citation type="journal article" date="2005" name="Plant Mol. Biol.">
        <title>Expression patterns of purple acid phosphatase genes in Arabidopsis organs and functional analysis of AtPAP23 predominantly transcribed in flower.</title>
        <authorList>
            <person name="Zhu H."/>
            <person name="Qian W."/>
            <person name="Lu X."/>
            <person name="Li D."/>
            <person name="Liu X."/>
            <person name="Liu K."/>
            <person name="Wang D."/>
        </authorList>
    </citation>
    <scope>TISSUE SPECIFICITY</scope>
</reference>
<dbReference type="EC" id="3.1.3.2"/>
<dbReference type="EMBL" id="AF492659">
    <property type="protein sequence ID" value="AAM15908.1"/>
    <property type="molecule type" value="mRNA"/>
</dbReference>
<dbReference type="EMBL" id="AC007069">
    <property type="protein sequence ID" value="AAD21780.1"/>
    <property type="status" value="ALT_SEQ"/>
    <property type="molecule type" value="Genomic_DNA"/>
</dbReference>
<dbReference type="EMBL" id="CP002685">
    <property type="protein sequence ID" value="AEC05511.1"/>
    <property type="molecule type" value="Genomic_DNA"/>
</dbReference>
<dbReference type="EMBL" id="AK118834">
    <property type="protein sequence ID" value="BAC43423.1"/>
    <property type="molecule type" value="mRNA"/>
</dbReference>
<dbReference type="EMBL" id="BT026449">
    <property type="protein sequence ID" value="ABH04556.1"/>
    <property type="molecule type" value="mRNA"/>
</dbReference>
<dbReference type="PIR" id="C84430">
    <property type="entry name" value="C84430"/>
</dbReference>
<dbReference type="RefSeq" id="NP_178297.2">
    <property type="nucleotide sequence ID" value="NM_126249.5"/>
</dbReference>
<dbReference type="SMR" id="Q8S341"/>
<dbReference type="BioGRID" id="122">
    <property type="interactions" value="1"/>
</dbReference>
<dbReference type="FunCoup" id="Q8S341">
    <property type="interactions" value="318"/>
</dbReference>
<dbReference type="IntAct" id="Q8S341">
    <property type="interactions" value="1"/>
</dbReference>
<dbReference type="STRING" id="3702.Q8S341"/>
<dbReference type="GlyCosmos" id="Q8S341">
    <property type="glycosylation" value="1 site, No reported glycans"/>
</dbReference>
<dbReference type="GlyGen" id="Q8S341">
    <property type="glycosylation" value="1 site"/>
</dbReference>
<dbReference type="PaxDb" id="3702-AT2G01880.1"/>
<dbReference type="ProteomicsDB" id="249034"/>
<dbReference type="EnsemblPlants" id="AT2G01880.1">
    <property type="protein sequence ID" value="AT2G01880.1"/>
    <property type="gene ID" value="AT2G01880"/>
</dbReference>
<dbReference type="GeneID" id="814719"/>
<dbReference type="Gramene" id="AT2G01880.1">
    <property type="protein sequence ID" value="AT2G01880.1"/>
    <property type="gene ID" value="AT2G01880"/>
</dbReference>
<dbReference type="KEGG" id="ath:AT2G01880"/>
<dbReference type="Araport" id="AT2G01880"/>
<dbReference type="TAIR" id="AT2G01880">
    <property type="gene designation" value="PAP7"/>
</dbReference>
<dbReference type="eggNOG" id="KOG2679">
    <property type="taxonomic scope" value="Eukaryota"/>
</dbReference>
<dbReference type="HOGENOM" id="CLU_043332_3_0_1"/>
<dbReference type="InParanoid" id="Q8S341"/>
<dbReference type="OMA" id="VFERPYQ"/>
<dbReference type="PhylomeDB" id="Q8S341"/>
<dbReference type="BioCyc" id="ARA:AT2G01880-MONOMER"/>
<dbReference type="PRO" id="PR:Q8S341"/>
<dbReference type="Proteomes" id="UP000006548">
    <property type="component" value="Chromosome 2"/>
</dbReference>
<dbReference type="ExpressionAtlas" id="Q8S341">
    <property type="expression patterns" value="baseline and differential"/>
</dbReference>
<dbReference type="GO" id="GO:0005576">
    <property type="term" value="C:extracellular region"/>
    <property type="evidence" value="ECO:0007669"/>
    <property type="project" value="UniProtKB-SubCell"/>
</dbReference>
<dbReference type="GO" id="GO:0003993">
    <property type="term" value="F:acid phosphatase activity"/>
    <property type="evidence" value="ECO:0000250"/>
    <property type="project" value="TAIR"/>
</dbReference>
<dbReference type="GO" id="GO:0046872">
    <property type="term" value="F:metal ion binding"/>
    <property type="evidence" value="ECO:0007669"/>
    <property type="project" value="UniProtKB-KW"/>
</dbReference>
<dbReference type="CDD" id="cd07378">
    <property type="entry name" value="MPP_ACP5"/>
    <property type="match status" value="1"/>
</dbReference>
<dbReference type="FunFam" id="3.60.21.10:FF:000027">
    <property type="entry name" value="Purple acid phosphatase"/>
    <property type="match status" value="1"/>
</dbReference>
<dbReference type="Gene3D" id="3.60.21.10">
    <property type="match status" value="1"/>
</dbReference>
<dbReference type="InterPro" id="IPR024927">
    <property type="entry name" value="Acid_PPase"/>
</dbReference>
<dbReference type="InterPro" id="IPR004843">
    <property type="entry name" value="Calcineurin-like_PHP_ApaH"/>
</dbReference>
<dbReference type="InterPro" id="IPR029052">
    <property type="entry name" value="Metallo-depent_PP-like"/>
</dbReference>
<dbReference type="InterPro" id="IPR051558">
    <property type="entry name" value="Metallophosphoesterase_PAP"/>
</dbReference>
<dbReference type="PANTHER" id="PTHR10161:SF50">
    <property type="entry name" value="PURPLE ACID PHOSPHATASE 7"/>
    <property type="match status" value="1"/>
</dbReference>
<dbReference type="PANTHER" id="PTHR10161">
    <property type="entry name" value="TARTRATE-RESISTANT ACID PHOSPHATASE TYPE 5"/>
    <property type="match status" value="1"/>
</dbReference>
<dbReference type="Pfam" id="PF00149">
    <property type="entry name" value="Metallophos"/>
    <property type="match status" value="1"/>
</dbReference>
<dbReference type="PIRSF" id="PIRSF000898">
    <property type="entry name" value="Acid_Ptase_5"/>
    <property type="match status" value="1"/>
</dbReference>
<dbReference type="SUPFAM" id="SSF56300">
    <property type="entry name" value="Metallo-dependent phosphatases"/>
    <property type="match status" value="1"/>
</dbReference>
<sequence length="328" mass="37549">MKMHVCFSVILMFLSIFFINGALSKLERLKHPVKKKSDGSLSFLVIGDWGRKGGFNQSLVAHQMGVVGEKLDIDFVISVGDNFYDDGLKGVNDPSFEASFSHIYTHPSLQKQWYSVLGNHDYRGNVEAQLSKVLTQKDWRWFCRRSFVLSSGMVDFFFADTNPFVEKYFTEPEDHTYDWRNVLPRNKYISNLLHDLDLEIKKSRATWKFVVGHHGIKTAGNHGVTQELVDQLLPILEENKVDLYINGHDHCLQHIGSHGKTQFLTSGGGSKAWRGHVQPWDPKELKLYYDGQGFMSLHITHSKAKFIYYDVSGNVLHRSSLSKRSAHL</sequence>
<proteinExistence type="evidence at transcript level"/>
<comment type="catalytic activity">
    <reaction>
        <text>a phosphate monoester + H2O = an alcohol + phosphate</text>
        <dbReference type="Rhea" id="RHEA:15017"/>
        <dbReference type="ChEBI" id="CHEBI:15377"/>
        <dbReference type="ChEBI" id="CHEBI:30879"/>
        <dbReference type="ChEBI" id="CHEBI:43474"/>
        <dbReference type="ChEBI" id="CHEBI:67140"/>
        <dbReference type="EC" id="3.1.3.2"/>
    </reaction>
</comment>
<comment type="cofactor">
    <cofactor evidence="1">
        <name>Fe cation</name>
        <dbReference type="ChEBI" id="CHEBI:24875"/>
    </cofactor>
    <text evidence="1">Binds 1 Fe cation per subunit.</text>
</comment>
<comment type="cofactor">
    <cofactor evidence="1">
        <name>Zn(2+)</name>
        <dbReference type="ChEBI" id="CHEBI:29105"/>
    </cofactor>
    <text evidence="1">Binds 1 zinc ion per subunit.</text>
</comment>
<comment type="subunit">
    <text evidence="1">Homodimer.</text>
</comment>
<comment type="subcellular location">
    <subcellularLocation>
        <location evidence="1">Secreted</location>
    </subcellularLocation>
</comment>
<comment type="tissue specificity">
    <text evidence="3">Expressed in roots, stems, leaves, flowers and siliques.</text>
</comment>
<comment type="similarity">
    <text evidence="4">Belongs to the metallophosphoesterase superfamily. Purple acid phosphatase family.</text>
</comment>
<comment type="sequence caution" evidence="4">
    <conflict type="erroneous gene model prediction">
        <sequence resource="EMBL-CDS" id="AAD21780"/>
    </conflict>
</comment>
<feature type="signal peptide" evidence="2">
    <location>
        <begin position="1"/>
        <end position="24"/>
    </location>
</feature>
<feature type="chain" id="PRO_0000372812" description="Purple acid phosphatase 7">
    <location>
        <begin position="25"/>
        <end position="328"/>
    </location>
</feature>
<feature type="active site" description="Proton donor" evidence="1">
    <location>
        <position position="222"/>
    </location>
</feature>
<feature type="binding site" evidence="1">
    <location>
        <position position="48"/>
    </location>
    <ligand>
        <name>Fe cation</name>
        <dbReference type="ChEBI" id="CHEBI:24875"/>
    </ligand>
</feature>
<feature type="binding site" evidence="1">
    <location>
        <position position="81"/>
    </location>
    <ligand>
        <name>Fe cation</name>
        <dbReference type="ChEBI" id="CHEBI:24875"/>
    </ligand>
</feature>
<feature type="binding site" evidence="1">
    <location>
        <position position="81"/>
    </location>
    <ligand>
        <name>Zn(2+)</name>
        <dbReference type="ChEBI" id="CHEBI:29105"/>
    </ligand>
</feature>
<feature type="binding site" evidence="1">
    <location>
        <position position="84"/>
    </location>
    <ligand>
        <name>Fe cation</name>
        <dbReference type="ChEBI" id="CHEBI:24875"/>
    </ligand>
</feature>
<feature type="binding site" evidence="1">
    <location>
        <position position="119"/>
    </location>
    <ligand>
        <name>Zn(2+)</name>
        <dbReference type="ChEBI" id="CHEBI:29105"/>
    </ligand>
</feature>
<feature type="binding site" evidence="1">
    <location>
        <position position="213"/>
    </location>
    <ligand>
        <name>Zn(2+)</name>
        <dbReference type="ChEBI" id="CHEBI:29105"/>
    </ligand>
</feature>
<feature type="binding site" evidence="1">
    <location>
        <begin position="248"/>
        <end position="250"/>
    </location>
    <ligand>
        <name>substrate</name>
    </ligand>
</feature>
<feature type="binding site" evidence="1">
    <location>
        <position position="248"/>
    </location>
    <ligand>
        <name>Zn(2+)</name>
        <dbReference type="ChEBI" id="CHEBI:29105"/>
    </ligand>
</feature>
<feature type="binding site" evidence="1">
    <location>
        <position position="250"/>
    </location>
    <ligand>
        <name>Fe cation</name>
        <dbReference type="ChEBI" id="CHEBI:24875"/>
    </ligand>
</feature>
<feature type="glycosylation site" description="N-linked (GlcNAc...) asparagine" evidence="2">
    <location>
        <position position="56"/>
    </location>
</feature>
<feature type="sequence conflict" description="In Ref. 4; BAC43423." evidence="4" ref="4">
    <original>H</original>
    <variation>L</variation>
    <location>
        <position position="317"/>
    </location>
</feature>
<gene>
    <name type="primary">PAP7</name>
    <name type="ordered locus">At2g01880</name>
    <name type="ORF">T23K3.7</name>
</gene>
<evidence type="ECO:0000250" key="1"/>
<evidence type="ECO:0000255" key="2"/>
<evidence type="ECO:0000269" key="3">
    <source>
    </source>
</evidence>
<evidence type="ECO:0000305" key="4"/>